<keyword id="KW-0143">Chaperone</keyword>
<keyword id="KW-0963">Cytoplasm</keyword>
<keyword id="KW-0346">Stress response</keyword>
<dbReference type="EMBL" id="AB070346">
    <property type="protein sequence ID" value="BAB63289.1"/>
    <property type="molecule type" value="Genomic_DNA"/>
</dbReference>
<dbReference type="RefSeq" id="WP_014124679.1">
    <property type="nucleotide sequence ID" value="NZ_JBBMXU010000006.1"/>
</dbReference>
<dbReference type="SMR" id="Q93R28"/>
<dbReference type="GeneID" id="64053906"/>
<dbReference type="OMA" id="PHRHQAI"/>
<dbReference type="GO" id="GO:0005737">
    <property type="term" value="C:cytoplasm"/>
    <property type="evidence" value="ECO:0007669"/>
    <property type="project" value="UniProtKB-SubCell"/>
</dbReference>
<dbReference type="GO" id="GO:0000774">
    <property type="term" value="F:adenyl-nucleotide exchange factor activity"/>
    <property type="evidence" value="ECO:0007669"/>
    <property type="project" value="InterPro"/>
</dbReference>
<dbReference type="GO" id="GO:0042803">
    <property type="term" value="F:protein homodimerization activity"/>
    <property type="evidence" value="ECO:0007669"/>
    <property type="project" value="InterPro"/>
</dbReference>
<dbReference type="GO" id="GO:0051087">
    <property type="term" value="F:protein-folding chaperone binding"/>
    <property type="evidence" value="ECO:0007669"/>
    <property type="project" value="InterPro"/>
</dbReference>
<dbReference type="GO" id="GO:0051082">
    <property type="term" value="F:unfolded protein binding"/>
    <property type="evidence" value="ECO:0007669"/>
    <property type="project" value="TreeGrafter"/>
</dbReference>
<dbReference type="GO" id="GO:0006457">
    <property type="term" value="P:protein folding"/>
    <property type="evidence" value="ECO:0007669"/>
    <property type="project" value="InterPro"/>
</dbReference>
<dbReference type="CDD" id="cd00446">
    <property type="entry name" value="GrpE"/>
    <property type="match status" value="1"/>
</dbReference>
<dbReference type="FunFam" id="2.30.22.10:FF:000001">
    <property type="entry name" value="Protein GrpE"/>
    <property type="match status" value="1"/>
</dbReference>
<dbReference type="Gene3D" id="3.90.20.20">
    <property type="match status" value="1"/>
</dbReference>
<dbReference type="Gene3D" id="2.30.22.10">
    <property type="entry name" value="Head domain of nucleotide exchange factor GrpE"/>
    <property type="match status" value="1"/>
</dbReference>
<dbReference type="HAMAP" id="MF_01151">
    <property type="entry name" value="GrpE"/>
    <property type="match status" value="1"/>
</dbReference>
<dbReference type="InterPro" id="IPR000740">
    <property type="entry name" value="GrpE"/>
</dbReference>
<dbReference type="InterPro" id="IPR013805">
    <property type="entry name" value="GrpE_coiled_coil"/>
</dbReference>
<dbReference type="InterPro" id="IPR009012">
    <property type="entry name" value="GrpE_head"/>
</dbReference>
<dbReference type="NCBIfam" id="NF010738">
    <property type="entry name" value="PRK14140.1"/>
    <property type="match status" value="1"/>
</dbReference>
<dbReference type="NCBIfam" id="NF010753">
    <property type="entry name" value="PRK14156.1"/>
    <property type="match status" value="1"/>
</dbReference>
<dbReference type="NCBIfam" id="NF010759">
    <property type="entry name" value="PRK14162.1"/>
    <property type="match status" value="1"/>
</dbReference>
<dbReference type="PANTHER" id="PTHR21237">
    <property type="entry name" value="GRPE PROTEIN"/>
    <property type="match status" value="1"/>
</dbReference>
<dbReference type="PANTHER" id="PTHR21237:SF23">
    <property type="entry name" value="GRPE PROTEIN HOMOLOG, MITOCHONDRIAL"/>
    <property type="match status" value="1"/>
</dbReference>
<dbReference type="Pfam" id="PF01025">
    <property type="entry name" value="GrpE"/>
    <property type="match status" value="1"/>
</dbReference>
<dbReference type="PRINTS" id="PR00773">
    <property type="entry name" value="GRPEPROTEIN"/>
</dbReference>
<dbReference type="SUPFAM" id="SSF58014">
    <property type="entry name" value="Coiled-coil domain of nucleotide exchange factor GrpE"/>
    <property type="match status" value="1"/>
</dbReference>
<dbReference type="SUPFAM" id="SSF51064">
    <property type="entry name" value="Head domain of nucleotide exchange factor GrpE"/>
    <property type="match status" value="1"/>
</dbReference>
<dbReference type="PROSITE" id="PS01071">
    <property type="entry name" value="GRPE"/>
    <property type="match status" value="1"/>
</dbReference>
<name>GRPE_TETHA</name>
<proteinExistence type="inferred from homology"/>
<gene>
    <name evidence="1" type="primary">grpE</name>
</gene>
<accession>Q93R28</accession>
<evidence type="ECO:0000255" key="1">
    <source>
        <dbReference type="HAMAP-Rule" id="MF_01151"/>
    </source>
</evidence>
<evidence type="ECO:0000256" key="2">
    <source>
        <dbReference type="SAM" id="MobiDB-lite"/>
    </source>
</evidence>
<feature type="chain" id="PRO_0000113881" description="Protein GrpE">
    <location>
        <begin position="1"/>
        <end position="191"/>
    </location>
</feature>
<feature type="region of interest" description="Disordered" evidence="2">
    <location>
        <begin position="1"/>
        <end position="39"/>
    </location>
</feature>
<feature type="compositionally biased region" description="Basic and acidic residues" evidence="2">
    <location>
        <begin position="1"/>
        <end position="21"/>
    </location>
</feature>
<feature type="compositionally biased region" description="Acidic residues" evidence="2">
    <location>
        <begin position="22"/>
        <end position="38"/>
    </location>
</feature>
<organism>
    <name type="scientific">Tetragenococcus halophilus</name>
    <name type="common">Pediococcus halophilus</name>
    <dbReference type="NCBI Taxonomy" id="51669"/>
    <lineage>
        <taxon>Bacteria</taxon>
        <taxon>Bacillati</taxon>
        <taxon>Bacillota</taxon>
        <taxon>Bacilli</taxon>
        <taxon>Lactobacillales</taxon>
        <taxon>Enterococcaceae</taxon>
        <taxon>Tetragenococcus</taxon>
    </lineage>
</organism>
<sequence>MSDKKKNAEEFEETFSDKTSEDESTVENETVEENENEDVQAISEVDDLKAQLDEMEDKYLRASAELSNMNNRFRNERQTLQRYRSQDLGKKLLPAIDNLERAVAIEVEGEQNESLKKGVEMTLESLRSAMQEEGIEEISAQGETFDPTLHQAVQTVPATEDHPAETVVEVLQKGYKIYDRVLRASMVVVAQ</sequence>
<comment type="function">
    <text evidence="1">Participates actively in the response to hyperosmotic and heat shock by preventing the aggregation of stress-denatured proteins, in association with DnaK and GrpE. It is the nucleotide exchange factor for DnaK and may function as a thermosensor. Unfolded proteins bind initially to DnaJ; upon interaction with the DnaJ-bound protein, DnaK hydrolyzes its bound ATP, resulting in the formation of a stable complex. GrpE releases ADP from DnaK; ATP binding to DnaK triggers the release of the substrate protein, thus completing the reaction cycle. Several rounds of ATP-dependent interactions between DnaJ, DnaK and GrpE are required for fully efficient folding.</text>
</comment>
<comment type="subunit">
    <text evidence="1">Homodimer.</text>
</comment>
<comment type="subcellular location">
    <subcellularLocation>
        <location evidence="1">Cytoplasm</location>
    </subcellularLocation>
</comment>
<comment type="similarity">
    <text evidence="1">Belongs to the GrpE family.</text>
</comment>
<reference key="1">
    <citation type="journal article" date="2002" name="Biosci. Biotechnol. Biochem.">
        <title>The groESL operon of the halophilic lactic acid bacterium Tetragenococcus halophila.</title>
        <authorList>
            <person name="Fukuda D."/>
            <person name="Watanabe M."/>
            <person name="Aso Y."/>
            <person name="Sonomoto K."/>
            <person name="Ishizaki A."/>
        </authorList>
    </citation>
    <scope>NUCLEOTIDE SEQUENCE [GENOMIC DNA]</scope>
</reference>
<protein>
    <recommendedName>
        <fullName evidence="1">Protein GrpE</fullName>
    </recommendedName>
    <alternativeName>
        <fullName evidence="1">HSP-70 cofactor</fullName>
    </alternativeName>
</protein>